<proteinExistence type="inferred from homology"/>
<evidence type="ECO:0000255" key="1">
    <source>
        <dbReference type="HAMAP-Rule" id="MF_00230"/>
    </source>
</evidence>
<keyword id="KW-0169">Cobalamin biosynthesis</keyword>
<keyword id="KW-0328">Glycosyltransferase</keyword>
<keyword id="KW-0808">Transferase</keyword>
<reference key="1">
    <citation type="submission" date="2006-12" db="EMBL/GenBank/DDBJ databases">
        <title>Complete sequence of Shewanella sp. W3-18-1.</title>
        <authorList>
            <consortium name="US DOE Joint Genome Institute"/>
            <person name="Copeland A."/>
            <person name="Lucas S."/>
            <person name="Lapidus A."/>
            <person name="Barry K."/>
            <person name="Detter J.C."/>
            <person name="Glavina del Rio T."/>
            <person name="Hammon N."/>
            <person name="Israni S."/>
            <person name="Dalin E."/>
            <person name="Tice H."/>
            <person name="Pitluck S."/>
            <person name="Chain P."/>
            <person name="Malfatti S."/>
            <person name="Shin M."/>
            <person name="Vergez L."/>
            <person name="Schmutz J."/>
            <person name="Larimer F."/>
            <person name="Land M."/>
            <person name="Hauser L."/>
            <person name="Kyrpides N."/>
            <person name="Lykidis A."/>
            <person name="Tiedje J."/>
            <person name="Richardson P."/>
        </authorList>
    </citation>
    <scope>NUCLEOTIDE SEQUENCE [LARGE SCALE GENOMIC DNA]</scope>
    <source>
        <strain>W3-18-1</strain>
    </source>
</reference>
<feature type="chain" id="PRO_1000021633" description="Nicotinate-nucleotide--dimethylbenzimidazole phosphoribosyltransferase">
    <location>
        <begin position="1"/>
        <end position="350"/>
    </location>
</feature>
<feature type="active site" description="Proton acceptor" evidence="1">
    <location>
        <position position="317"/>
    </location>
</feature>
<gene>
    <name evidence="1" type="primary">cobT</name>
    <name type="ordered locus">Sputw3181_0986</name>
</gene>
<dbReference type="EC" id="2.4.2.21" evidence="1"/>
<dbReference type="EMBL" id="CP000503">
    <property type="protein sequence ID" value="ABM23836.1"/>
    <property type="molecule type" value="Genomic_DNA"/>
</dbReference>
<dbReference type="RefSeq" id="WP_011788362.1">
    <property type="nucleotide sequence ID" value="NC_008750.1"/>
</dbReference>
<dbReference type="SMR" id="A1RGP1"/>
<dbReference type="KEGG" id="shw:Sputw3181_0986"/>
<dbReference type="HOGENOM" id="CLU_002982_0_0_6"/>
<dbReference type="UniPathway" id="UPA00061">
    <property type="reaction ID" value="UER00516"/>
</dbReference>
<dbReference type="Proteomes" id="UP000002597">
    <property type="component" value="Chromosome"/>
</dbReference>
<dbReference type="GO" id="GO:0008939">
    <property type="term" value="F:nicotinate-nucleotide-dimethylbenzimidazole phosphoribosyltransferase activity"/>
    <property type="evidence" value="ECO:0007669"/>
    <property type="project" value="UniProtKB-UniRule"/>
</dbReference>
<dbReference type="GO" id="GO:0009236">
    <property type="term" value="P:cobalamin biosynthetic process"/>
    <property type="evidence" value="ECO:0007669"/>
    <property type="project" value="UniProtKB-KW"/>
</dbReference>
<dbReference type="CDD" id="cd02439">
    <property type="entry name" value="DMB-PRT_CobT"/>
    <property type="match status" value="1"/>
</dbReference>
<dbReference type="FunFam" id="3.40.50.10210:FF:000001">
    <property type="entry name" value="Nicotinate-nucleotide--dimethylbenzimidazole phosphoribosyltransferase"/>
    <property type="match status" value="1"/>
</dbReference>
<dbReference type="Gene3D" id="1.10.1610.10">
    <property type="match status" value="1"/>
</dbReference>
<dbReference type="Gene3D" id="3.40.50.10210">
    <property type="match status" value="1"/>
</dbReference>
<dbReference type="HAMAP" id="MF_00230">
    <property type="entry name" value="CobT"/>
    <property type="match status" value="1"/>
</dbReference>
<dbReference type="InterPro" id="IPR003200">
    <property type="entry name" value="Nict_dMeBzImd_PRibTrfase"/>
</dbReference>
<dbReference type="InterPro" id="IPR017846">
    <property type="entry name" value="Nict_dMeBzImd_PRibTrfase_bact"/>
</dbReference>
<dbReference type="InterPro" id="IPR023195">
    <property type="entry name" value="Nict_dMeBzImd_PRibTrfase_N"/>
</dbReference>
<dbReference type="InterPro" id="IPR036087">
    <property type="entry name" value="Nict_dMeBzImd_PRibTrfase_sf"/>
</dbReference>
<dbReference type="NCBIfam" id="TIGR03160">
    <property type="entry name" value="cobT_DBIPRT"/>
    <property type="match status" value="1"/>
</dbReference>
<dbReference type="NCBIfam" id="NF000996">
    <property type="entry name" value="PRK00105.1"/>
    <property type="match status" value="1"/>
</dbReference>
<dbReference type="PANTHER" id="PTHR43463">
    <property type="entry name" value="NICOTINATE-NUCLEOTIDE--DIMETHYLBENZIMIDAZOLE PHOSPHORIBOSYLTRANSFERASE"/>
    <property type="match status" value="1"/>
</dbReference>
<dbReference type="PANTHER" id="PTHR43463:SF1">
    <property type="entry name" value="NICOTINATE-NUCLEOTIDE--DIMETHYLBENZIMIDAZOLE PHOSPHORIBOSYLTRANSFERASE"/>
    <property type="match status" value="1"/>
</dbReference>
<dbReference type="Pfam" id="PF02277">
    <property type="entry name" value="DBI_PRT"/>
    <property type="match status" value="1"/>
</dbReference>
<dbReference type="SUPFAM" id="SSF52733">
    <property type="entry name" value="Nicotinate mononucleotide:5,6-dimethylbenzimidazole phosphoribosyltransferase (CobT)"/>
    <property type="match status" value="1"/>
</dbReference>
<sequence length="350" mass="36905">MSQSAVSFQINPVSKVQEQSIQQKINLKTKPLGALGQLESLALQIARIQGADQPYIANPTMLVFAGDHGIAAEGVSIAPSEVTRQMVQNFAHGGAAINVFCRQVGFKLEVIDCGILTPIEGVKGIIDQRLGAGTGAIHLEPAMALETVDKGFAMARDLIERHHQTGCNLVAFGEMGIGNTSAASAIMAAIMQLDVIDCVGRGTGINQETLARKLMLIELALLLHQSALTGPKEVLACLGGFEIVQMTGAMLAAAERNMLVVVDGFIATAAALVAVTIAPNVRDYLIFAHQSEEQGHLRMLEFLQAKPLLSLGLRLGEGTGAALALPLIQAAVNFYNQMASFSDAGIEAVV</sequence>
<organism>
    <name type="scientific">Shewanella sp. (strain W3-18-1)</name>
    <dbReference type="NCBI Taxonomy" id="351745"/>
    <lineage>
        <taxon>Bacteria</taxon>
        <taxon>Pseudomonadati</taxon>
        <taxon>Pseudomonadota</taxon>
        <taxon>Gammaproteobacteria</taxon>
        <taxon>Alteromonadales</taxon>
        <taxon>Shewanellaceae</taxon>
        <taxon>Shewanella</taxon>
    </lineage>
</organism>
<name>COBT_SHESW</name>
<accession>A1RGP1</accession>
<comment type="function">
    <text evidence="1">Catalyzes the synthesis of alpha-ribazole-5'-phosphate from nicotinate mononucleotide (NAMN) and 5,6-dimethylbenzimidazole (DMB).</text>
</comment>
<comment type="catalytic activity">
    <reaction evidence="1">
        <text>5,6-dimethylbenzimidazole + nicotinate beta-D-ribonucleotide = alpha-ribazole 5'-phosphate + nicotinate + H(+)</text>
        <dbReference type="Rhea" id="RHEA:11196"/>
        <dbReference type="ChEBI" id="CHEBI:15378"/>
        <dbReference type="ChEBI" id="CHEBI:15890"/>
        <dbReference type="ChEBI" id="CHEBI:32544"/>
        <dbReference type="ChEBI" id="CHEBI:57502"/>
        <dbReference type="ChEBI" id="CHEBI:57918"/>
        <dbReference type="EC" id="2.4.2.21"/>
    </reaction>
</comment>
<comment type="pathway">
    <text evidence="1">Nucleoside biosynthesis; alpha-ribazole biosynthesis; alpha-ribazole from 5,6-dimethylbenzimidazole: step 1/2.</text>
</comment>
<comment type="similarity">
    <text evidence="1">Belongs to the CobT family.</text>
</comment>
<protein>
    <recommendedName>
        <fullName evidence="1">Nicotinate-nucleotide--dimethylbenzimidazole phosphoribosyltransferase</fullName>
        <shortName evidence="1">NN:DBI PRT</shortName>
        <ecNumber evidence="1">2.4.2.21</ecNumber>
    </recommendedName>
    <alternativeName>
        <fullName evidence="1">N(1)-alpha-phosphoribosyltransferase</fullName>
    </alternativeName>
</protein>